<proteinExistence type="evidence at protein level"/>
<dbReference type="EMBL" id="AK173238">
    <property type="protein sequence ID" value="BAD32516.1"/>
    <property type="status" value="ALT_INIT"/>
    <property type="molecule type" value="mRNA"/>
</dbReference>
<dbReference type="EMBL" id="AK082912">
    <property type="protein sequence ID" value="BAC38684.1"/>
    <property type="molecule type" value="mRNA"/>
</dbReference>
<dbReference type="EMBL" id="BC029731">
    <property type="protein sequence ID" value="AAH29731.1"/>
    <property type="molecule type" value="mRNA"/>
</dbReference>
<dbReference type="CCDS" id="CCDS27283.1"/>
<dbReference type="RefSeq" id="NP_080453.2">
    <property type="nucleotide sequence ID" value="NM_026177.3"/>
</dbReference>
<dbReference type="SMR" id="Q69ZC8"/>
<dbReference type="BioGRID" id="212209">
    <property type="interactions" value="3"/>
</dbReference>
<dbReference type="FunCoup" id="Q69ZC8">
    <property type="interactions" value="1335"/>
</dbReference>
<dbReference type="IntAct" id="Q69ZC8">
    <property type="interactions" value="1"/>
</dbReference>
<dbReference type="MINT" id="Q69ZC8"/>
<dbReference type="STRING" id="10090.ENSMUSP00000022585"/>
<dbReference type="iPTMnet" id="Q69ZC8"/>
<dbReference type="PhosphoSitePlus" id="Q69ZC8"/>
<dbReference type="jPOST" id="Q69ZC8"/>
<dbReference type="PaxDb" id="10090-ENSMUSP00000022585"/>
<dbReference type="PeptideAtlas" id="Q69ZC8"/>
<dbReference type="ProteomicsDB" id="271033"/>
<dbReference type="Pumba" id="Q69ZC8"/>
<dbReference type="Ensembl" id="ENSMUST00000022585.5">
    <property type="protein sequence ID" value="ENSMUSP00000022585.4"/>
    <property type="gene ID" value="ENSMUSG00000022008.5"/>
</dbReference>
<dbReference type="GeneID" id="67467"/>
<dbReference type="KEGG" id="mmu:67467"/>
<dbReference type="UCSC" id="uc007urd.1">
    <property type="organism name" value="mouse"/>
</dbReference>
<dbReference type="AGR" id="MGI:1914717"/>
<dbReference type="CTD" id="55425"/>
<dbReference type="MGI" id="MGI:1914717">
    <property type="gene designation" value="Gpalpp1"/>
</dbReference>
<dbReference type="VEuPathDB" id="HostDB:ENSMUSG00000022008"/>
<dbReference type="eggNOG" id="KOG4188">
    <property type="taxonomic scope" value="Eukaryota"/>
</dbReference>
<dbReference type="GeneTree" id="ENSGT00390000012569"/>
<dbReference type="HOGENOM" id="CLU_029231_1_0_1"/>
<dbReference type="InParanoid" id="Q69ZC8"/>
<dbReference type="OMA" id="NKAADFG"/>
<dbReference type="OrthoDB" id="73491at2759"/>
<dbReference type="PhylomeDB" id="Q69ZC8"/>
<dbReference type="TreeFam" id="TF314389"/>
<dbReference type="BioGRID-ORCS" id="67467">
    <property type="hits" value="2 hits in 77 CRISPR screens"/>
</dbReference>
<dbReference type="ChiTaRS" id="Gpalpp1">
    <property type="organism name" value="mouse"/>
</dbReference>
<dbReference type="PRO" id="PR:Q69ZC8"/>
<dbReference type="Proteomes" id="UP000000589">
    <property type="component" value="Chromosome 14"/>
</dbReference>
<dbReference type="RNAct" id="Q69ZC8">
    <property type="molecule type" value="protein"/>
</dbReference>
<dbReference type="Bgee" id="ENSMUSG00000022008">
    <property type="expression patterns" value="Expressed in saccule of membranous labyrinth and 258 other cell types or tissues"/>
</dbReference>
<dbReference type="InterPro" id="IPR022226">
    <property type="entry name" value="DUF3752"/>
</dbReference>
<dbReference type="InterPro" id="IPR046331">
    <property type="entry name" value="GPAM1-like"/>
</dbReference>
<dbReference type="PANTHER" id="PTHR46370">
    <property type="entry name" value="GPALPP MOTIFS-CONTAINING PROTEIN 1"/>
    <property type="match status" value="1"/>
</dbReference>
<dbReference type="PANTHER" id="PTHR46370:SF1">
    <property type="entry name" value="GPALPP MOTIFS-CONTAINING PROTEIN 1"/>
    <property type="match status" value="1"/>
</dbReference>
<dbReference type="Pfam" id="PF12572">
    <property type="entry name" value="DUF3752"/>
    <property type="match status" value="1"/>
</dbReference>
<feature type="initiator methionine" description="Removed" evidence="2">
    <location>
        <position position="1"/>
    </location>
</feature>
<feature type="chain" id="PRO_0000293715" description="GPALPP motifs-containing protein 1">
    <location>
        <begin position="2"/>
        <end position="346"/>
    </location>
</feature>
<feature type="region of interest" description="Disordered" evidence="3">
    <location>
        <begin position="1"/>
        <end position="283"/>
    </location>
</feature>
<feature type="region of interest" description="Disordered" evidence="3">
    <location>
        <begin position="289"/>
        <end position="308"/>
    </location>
</feature>
<feature type="short sequence motif" description="GPALPP motif 1">
    <location>
        <begin position="7"/>
        <end position="12"/>
    </location>
</feature>
<feature type="short sequence motif" description="GPALPP motif 2">
    <location>
        <begin position="32"/>
        <end position="37"/>
    </location>
</feature>
<feature type="short sequence motif" description="GPALPP motif 3">
    <location>
        <begin position="91"/>
        <end position="96"/>
    </location>
</feature>
<feature type="short sequence motif" description="GPALPP motif 4">
    <location>
        <begin position="111"/>
        <end position="116"/>
    </location>
</feature>
<feature type="compositionally biased region" description="Acidic residues" evidence="3">
    <location>
        <begin position="60"/>
        <end position="69"/>
    </location>
</feature>
<feature type="compositionally biased region" description="Pro residues" evidence="3">
    <location>
        <begin position="106"/>
        <end position="115"/>
    </location>
</feature>
<feature type="compositionally biased region" description="Basic and acidic residues" evidence="3">
    <location>
        <begin position="123"/>
        <end position="132"/>
    </location>
</feature>
<feature type="compositionally biased region" description="Acidic residues" evidence="3">
    <location>
        <begin position="142"/>
        <end position="152"/>
    </location>
</feature>
<feature type="compositionally biased region" description="Basic and acidic residues" evidence="3">
    <location>
        <begin position="169"/>
        <end position="193"/>
    </location>
</feature>
<feature type="compositionally biased region" description="Basic and acidic residues" evidence="3">
    <location>
        <begin position="233"/>
        <end position="267"/>
    </location>
</feature>
<feature type="compositionally biased region" description="Basic and acidic residues" evidence="3">
    <location>
        <begin position="293"/>
        <end position="308"/>
    </location>
</feature>
<feature type="modified residue" description="N-acetylalanine" evidence="2">
    <location>
        <position position="2"/>
    </location>
</feature>
<feature type="modified residue" description="Phosphoserine" evidence="2">
    <location>
        <position position="28"/>
    </location>
</feature>
<feature type="modified residue" description="Phosphoserine" evidence="6 7 9">
    <location>
        <position position="104"/>
    </location>
</feature>
<feature type="modified residue" description="Phosphoserine" evidence="1">
    <location>
        <position position="136"/>
    </location>
</feature>
<feature type="modified residue" description="Phosphoserine" evidence="1">
    <location>
        <position position="141"/>
    </location>
</feature>
<feature type="modified residue" description="Phosphoserine" evidence="5 8 9">
    <location>
        <position position="146"/>
    </location>
</feature>
<feature type="cross-link" description="Glycyl lysine isopeptide (Lys-Gly) (interchain with G-Cter in SUMO2)" evidence="2">
    <location>
        <position position="277"/>
    </location>
</feature>
<feature type="cross-link" description="Glycyl lysine isopeptide (Lys-Gly) (interchain with G-Cter in SUMO2)" evidence="2">
    <location>
        <position position="314"/>
    </location>
</feature>
<evidence type="ECO:0000250" key="1">
    <source>
        <dbReference type="UniProtKB" id="Q4V893"/>
    </source>
</evidence>
<evidence type="ECO:0000250" key="2">
    <source>
        <dbReference type="UniProtKB" id="Q8IXQ4"/>
    </source>
</evidence>
<evidence type="ECO:0000256" key="3">
    <source>
        <dbReference type="SAM" id="MobiDB-lite"/>
    </source>
</evidence>
<evidence type="ECO:0000305" key="4"/>
<evidence type="ECO:0007744" key="5">
    <source>
    </source>
</evidence>
<evidence type="ECO:0007744" key="6">
    <source>
    </source>
</evidence>
<evidence type="ECO:0007744" key="7">
    <source>
    </source>
</evidence>
<evidence type="ECO:0007744" key="8">
    <source>
    </source>
</evidence>
<evidence type="ECO:0007744" key="9">
    <source>
    </source>
</evidence>
<keyword id="KW-0007">Acetylation</keyword>
<keyword id="KW-1017">Isopeptide bond</keyword>
<keyword id="KW-0597">Phosphoprotein</keyword>
<keyword id="KW-1185">Reference proteome</keyword>
<keyword id="KW-0832">Ubl conjugation</keyword>
<protein>
    <recommendedName>
        <fullName>GPALPP motifs-containing protein 1</fullName>
    </recommendedName>
</protein>
<name>GPAM1_MOUSE</name>
<sequence length="346" mass="38955">MARDLIGPALPPGFKEHATVEDEERDPSPVAGPALPPNYRSCSSDSSDSDEDSSSLSEEGNQESEEEDTGPNAKKQRRNQDDDDDDDGFFGPALPPGFKKQDDSPPRPIIGPALPPGFIKSPQKNDKGREDPGQVSSFFNSEEAESGEDEDIVGPMPAKGPVNYSVTTEFEKRAQRMKEKLTKGDDDSSKPITRESWMTELPPEMKEFGLGPRTFKRRADDKSGDRSVWTDTPADRERKAKEIQEARKSFSKKDEENILSGRDKRLAEQVSSYNESKRSESLMDIHHKKLKSKAAEDKNKHQERIPFDRDKDLKVNRFDEAQKKALIKKSRELNTRFSHGKGNMFL</sequence>
<gene>
    <name type="primary">Gpalpp1</name>
    <name type="synonym">Kiaa1704</name>
</gene>
<accession>Q69ZC8</accession>
<accession>Q8K2V8</accession>
<reference key="1">
    <citation type="journal article" date="2004" name="DNA Res.">
        <title>Prediction of the coding sequences of mouse homologues of KIAA gene: IV. The complete nucleotide sequences of 500 mouse KIAA-homologous cDNAs identified by screening of terminal sequences of cDNA clones randomly sampled from size-fractionated libraries.</title>
        <authorList>
            <person name="Okazaki N."/>
            <person name="Kikuno R."/>
            <person name="Ohara R."/>
            <person name="Inamoto S."/>
            <person name="Koseki H."/>
            <person name="Hiraoka S."/>
            <person name="Saga Y."/>
            <person name="Seino S."/>
            <person name="Nishimura M."/>
            <person name="Kaisho T."/>
            <person name="Hoshino K."/>
            <person name="Kitamura H."/>
            <person name="Nagase T."/>
            <person name="Ohara O."/>
            <person name="Koga H."/>
        </authorList>
    </citation>
    <scope>NUCLEOTIDE SEQUENCE [LARGE SCALE MRNA]</scope>
</reference>
<reference key="2">
    <citation type="journal article" date="2005" name="Science">
        <title>The transcriptional landscape of the mammalian genome.</title>
        <authorList>
            <person name="Carninci P."/>
            <person name="Kasukawa T."/>
            <person name="Katayama S."/>
            <person name="Gough J."/>
            <person name="Frith M.C."/>
            <person name="Maeda N."/>
            <person name="Oyama R."/>
            <person name="Ravasi T."/>
            <person name="Lenhard B."/>
            <person name="Wells C."/>
            <person name="Kodzius R."/>
            <person name="Shimokawa K."/>
            <person name="Bajic V.B."/>
            <person name="Brenner S.E."/>
            <person name="Batalov S."/>
            <person name="Forrest A.R."/>
            <person name="Zavolan M."/>
            <person name="Davis M.J."/>
            <person name="Wilming L.G."/>
            <person name="Aidinis V."/>
            <person name="Allen J.E."/>
            <person name="Ambesi-Impiombato A."/>
            <person name="Apweiler R."/>
            <person name="Aturaliya R.N."/>
            <person name="Bailey T.L."/>
            <person name="Bansal M."/>
            <person name="Baxter L."/>
            <person name="Beisel K.W."/>
            <person name="Bersano T."/>
            <person name="Bono H."/>
            <person name="Chalk A.M."/>
            <person name="Chiu K.P."/>
            <person name="Choudhary V."/>
            <person name="Christoffels A."/>
            <person name="Clutterbuck D.R."/>
            <person name="Crowe M.L."/>
            <person name="Dalla E."/>
            <person name="Dalrymple B.P."/>
            <person name="de Bono B."/>
            <person name="Della Gatta G."/>
            <person name="di Bernardo D."/>
            <person name="Down T."/>
            <person name="Engstrom P."/>
            <person name="Fagiolini M."/>
            <person name="Faulkner G."/>
            <person name="Fletcher C.F."/>
            <person name="Fukushima T."/>
            <person name="Furuno M."/>
            <person name="Futaki S."/>
            <person name="Gariboldi M."/>
            <person name="Georgii-Hemming P."/>
            <person name="Gingeras T.R."/>
            <person name="Gojobori T."/>
            <person name="Green R.E."/>
            <person name="Gustincich S."/>
            <person name="Harbers M."/>
            <person name="Hayashi Y."/>
            <person name="Hensch T.K."/>
            <person name="Hirokawa N."/>
            <person name="Hill D."/>
            <person name="Huminiecki L."/>
            <person name="Iacono M."/>
            <person name="Ikeo K."/>
            <person name="Iwama A."/>
            <person name="Ishikawa T."/>
            <person name="Jakt M."/>
            <person name="Kanapin A."/>
            <person name="Katoh M."/>
            <person name="Kawasawa Y."/>
            <person name="Kelso J."/>
            <person name="Kitamura H."/>
            <person name="Kitano H."/>
            <person name="Kollias G."/>
            <person name="Krishnan S.P."/>
            <person name="Kruger A."/>
            <person name="Kummerfeld S.K."/>
            <person name="Kurochkin I.V."/>
            <person name="Lareau L.F."/>
            <person name="Lazarevic D."/>
            <person name="Lipovich L."/>
            <person name="Liu J."/>
            <person name="Liuni S."/>
            <person name="McWilliam S."/>
            <person name="Madan Babu M."/>
            <person name="Madera M."/>
            <person name="Marchionni L."/>
            <person name="Matsuda H."/>
            <person name="Matsuzawa S."/>
            <person name="Miki H."/>
            <person name="Mignone F."/>
            <person name="Miyake S."/>
            <person name="Morris K."/>
            <person name="Mottagui-Tabar S."/>
            <person name="Mulder N."/>
            <person name="Nakano N."/>
            <person name="Nakauchi H."/>
            <person name="Ng P."/>
            <person name="Nilsson R."/>
            <person name="Nishiguchi S."/>
            <person name="Nishikawa S."/>
            <person name="Nori F."/>
            <person name="Ohara O."/>
            <person name="Okazaki Y."/>
            <person name="Orlando V."/>
            <person name="Pang K.C."/>
            <person name="Pavan W.J."/>
            <person name="Pavesi G."/>
            <person name="Pesole G."/>
            <person name="Petrovsky N."/>
            <person name="Piazza S."/>
            <person name="Reed J."/>
            <person name="Reid J.F."/>
            <person name="Ring B.Z."/>
            <person name="Ringwald M."/>
            <person name="Rost B."/>
            <person name="Ruan Y."/>
            <person name="Salzberg S.L."/>
            <person name="Sandelin A."/>
            <person name="Schneider C."/>
            <person name="Schoenbach C."/>
            <person name="Sekiguchi K."/>
            <person name="Semple C.A."/>
            <person name="Seno S."/>
            <person name="Sessa L."/>
            <person name="Sheng Y."/>
            <person name="Shibata Y."/>
            <person name="Shimada H."/>
            <person name="Shimada K."/>
            <person name="Silva D."/>
            <person name="Sinclair B."/>
            <person name="Sperling S."/>
            <person name="Stupka E."/>
            <person name="Sugiura K."/>
            <person name="Sultana R."/>
            <person name="Takenaka Y."/>
            <person name="Taki K."/>
            <person name="Tammoja K."/>
            <person name="Tan S.L."/>
            <person name="Tang S."/>
            <person name="Taylor M.S."/>
            <person name="Tegner J."/>
            <person name="Teichmann S.A."/>
            <person name="Ueda H.R."/>
            <person name="van Nimwegen E."/>
            <person name="Verardo R."/>
            <person name="Wei C.L."/>
            <person name="Yagi K."/>
            <person name="Yamanishi H."/>
            <person name="Zabarovsky E."/>
            <person name="Zhu S."/>
            <person name="Zimmer A."/>
            <person name="Hide W."/>
            <person name="Bult C."/>
            <person name="Grimmond S.M."/>
            <person name="Teasdale R.D."/>
            <person name="Liu E.T."/>
            <person name="Brusic V."/>
            <person name="Quackenbush J."/>
            <person name="Wahlestedt C."/>
            <person name="Mattick J.S."/>
            <person name="Hume D.A."/>
            <person name="Kai C."/>
            <person name="Sasaki D."/>
            <person name="Tomaru Y."/>
            <person name="Fukuda S."/>
            <person name="Kanamori-Katayama M."/>
            <person name="Suzuki M."/>
            <person name="Aoki J."/>
            <person name="Arakawa T."/>
            <person name="Iida J."/>
            <person name="Imamura K."/>
            <person name="Itoh M."/>
            <person name="Kato T."/>
            <person name="Kawaji H."/>
            <person name="Kawagashira N."/>
            <person name="Kawashima T."/>
            <person name="Kojima M."/>
            <person name="Kondo S."/>
            <person name="Konno H."/>
            <person name="Nakano K."/>
            <person name="Ninomiya N."/>
            <person name="Nishio T."/>
            <person name="Okada M."/>
            <person name="Plessy C."/>
            <person name="Shibata K."/>
            <person name="Shiraki T."/>
            <person name="Suzuki S."/>
            <person name="Tagami M."/>
            <person name="Waki K."/>
            <person name="Watahiki A."/>
            <person name="Okamura-Oho Y."/>
            <person name="Suzuki H."/>
            <person name="Kawai J."/>
            <person name="Hayashizaki Y."/>
        </authorList>
    </citation>
    <scope>NUCLEOTIDE SEQUENCE [LARGE SCALE MRNA]</scope>
    <source>
        <strain>C57BL/6J</strain>
        <tissue>Embryo</tissue>
    </source>
</reference>
<reference key="3">
    <citation type="journal article" date="2004" name="Genome Res.">
        <title>The status, quality, and expansion of the NIH full-length cDNA project: the Mammalian Gene Collection (MGC).</title>
        <authorList>
            <consortium name="The MGC Project Team"/>
        </authorList>
    </citation>
    <scope>NUCLEOTIDE SEQUENCE [LARGE SCALE MRNA]</scope>
    <source>
        <strain>FVB/N</strain>
        <tissue>Mammary tumor</tissue>
    </source>
</reference>
<reference key="4">
    <citation type="journal article" date="2004" name="Mol. Cell. Proteomics">
        <title>Phosphoproteomic analysis of the developing mouse brain.</title>
        <authorList>
            <person name="Ballif B.A."/>
            <person name="Villen J."/>
            <person name="Beausoleil S.A."/>
            <person name="Schwartz D."/>
            <person name="Gygi S.P."/>
        </authorList>
    </citation>
    <scope>PHOSPHORYLATION [LARGE SCALE ANALYSIS] AT SER-146</scope>
    <scope>IDENTIFICATION BY MASS SPECTROMETRY [LARGE SCALE ANALYSIS]</scope>
    <source>
        <tissue>Embryonic brain</tissue>
    </source>
</reference>
<reference key="5">
    <citation type="journal article" date="2007" name="Proc. Natl. Acad. Sci. U.S.A.">
        <title>Large-scale phosphorylation analysis of mouse liver.</title>
        <authorList>
            <person name="Villen J."/>
            <person name="Beausoleil S.A."/>
            <person name="Gerber S.A."/>
            <person name="Gygi S.P."/>
        </authorList>
    </citation>
    <scope>PHOSPHORYLATION [LARGE SCALE ANALYSIS] AT SER-104</scope>
    <scope>IDENTIFICATION BY MASS SPECTROMETRY [LARGE SCALE ANALYSIS]</scope>
    <source>
        <tissue>Liver</tissue>
    </source>
</reference>
<reference key="6">
    <citation type="journal article" date="2009" name="Immunity">
        <title>The phagosomal proteome in interferon-gamma-activated macrophages.</title>
        <authorList>
            <person name="Trost M."/>
            <person name="English L."/>
            <person name="Lemieux S."/>
            <person name="Courcelles M."/>
            <person name="Desjardins M."/>
            <person name="Thibault P."/>
        </authorList>
    </citation>
    <scope>PHOSPHORYLATION [LARGE SCALE ANALYSIS] AT SER-146</scope>
    <scope>IDENTIFICATION BY MASS SPECTROMETRY [LARGE SCALE ANALYSIS]</scope>
</reference>
<reference key="7">
    <citation type="journal article" date="2009" name="Mol. Cell. Proteomics">
        <title>Large scale localization of protein phosphorylation by use of electron capture dissociation mass spectrometry.</title>
        <authorList>
            <person name="Sweet S.M."/>
            <person name="Bailey C.M."/>
            <person name="Cunningham D.L."/>
            <person name="Heath J.K."/>
            <person name="Cooper H.J."/>
        </authorList>
    </citation>
    <scope>PHOSPHORYLATION [LARGE SCALE ANALYSIS] AT SER-104</scope>
    <scope>IDENTIFICATION BY MASS SPECTROMETRY [LARGE SCALE ANALYSIS]</scope>
    <source>
        <tissue>Embryonic fibroblast</tissue>
    </source>
</reference>
<reference key="8">
    <citation type="journal article" date="2010" name="Cell">
        <title>A tissue-specific atlas of mouse protein phosphorylation and expression.</title>
        <authorList>
            <person name="Huttlin E.L."/>
            <person name="Jedrychowski M.P."/>
            <person name="Elias J.E."/>
            <person name="Goswami T."/>
            <person name="Rad R."/>
            <person name="Beausoleil S.A."/>
            <person name="Villen J."/>
            <person name="Haas W."/>
            <person name="Sowa M.E."/>
            <person name="Gygi S.P."/>
        </authorList>
    </citation>
    <scope>PHOSPHORYLATION [LARGE SCALE ANALYSIS] AT SER-104 AND SER-146</scope>
    <scope>IDENTIFICATION BY MASS SPECTROMETRY [LARGE SCALE ANALYSIS]</scope>
    <source>
        <tissue>Brain</tissue>
        <tissue>Brown adipose tissue</tissue>
        <tissue>Heart</tissue>
        <tissue>Kidney</tissue>
        <tissue>Lung</tissue>
        <tissue>Pancreas</tissue>
        <tissue>Spleen</tissue>
        <tissue>Testis</tissue>
    </source>
</reference>
<comment type="sequence caution" evidence="4">
    <conflict type="erroneous initiation">
        <sequence resource="EMBL-CDS" id="BAD32516"/>
    </conflict>
    <text>Extended N-terminus.</text>
</comment>
<organism>
    <name type="scientific">Mus musculus</name>
    <name type="common">Mouse</name>
    <dbReference type="NCBI Taxonomy" id="10090"/>
    <lineage>
        <taxon>Eukaryota</taxon>
        <taxon>Metazoa</taxon>
        <taxon>Chordata</taxon>
        <taxon>Craniata</taxon>
        <taxon>Vertebrata</taxon>
        <taxon>Euteleostomi</taxon>
        <taxon>Mammalia</taxon>
        <taxon>Eutheria</taxon>
        <taxon>Euarchontoglires</taxon>
        <taxon>Glires</taxon>
        <taxon>Rodentia</taxon>
        <taxon>Myomorpha</taxon>
        <taxon>Muroidea</taxon>
        <taxon>Muridae</taxon>
        <taxon>Murinae</taxon>
        <taxon>Mus</taxon>
        <taxon>Mus</taxon>
    </lineage>
</organism>